<name>IPNA_EMENI</name>
<reference key="1">
    <citation type="journal article" date="1987" name="Gene">
        <title>Cloning and characterization of the isopenicillin N synthetase gene mediating the formation of the beta-lactam ring in Aspergillus nidulans.</title>
        <authorList>
            <person name="Ramon D."/>
            <person name="Carramolino L."/>
            <person name="Patino C."/>
            <person name="Sanchez F."/>
            <person name="Penalva M.A."/>
        </authorList>
    </citation>
    <scope>NUCLEOTIDE SEQUENCE [GENOMIC DNA]</scope>
    <scope>FUNCTION</scope>
    <scope>CATALYTIC ACTIVITY</scope>
    <scope>PATHWAY</scope>
</reference>
<reference key="2">
    <citation type="journal article" date="1988" name="J. Bacteriol.">
        <title>Cloning and expression in Escherichia coli of isopenicillin N synthetase genes from Streptomyces lipmanii and Aspergillus nidulans.</title>
        <authorList>
            <person name="Weigel B.J."/>
            <person name="Burgett S.G."/>
            <person name="Chen V.J."/>
            <person name="Skatrud P.L."/>
            <person name="Frolik C.A."/>
            <person name="Queener S.W."/>
            <person name="Ingolia T.D."/>
        </authorList>
    </citation>
    <scope>NUCLEOTIDE SEQUENCE [GENOMIC DNA]</scope>
</reference>
<reference key="3">
    <citation type="journal article" date="2005" name="Nature">
        <title>Sequencing of Aspergillus nidulans and comparative analysis with A. fumigatus and A. oryzae.</title>
        <authorList>
            <person name="Galagan J.E."/>
            <person name="Calvo S.E."/>
            <person name="Cuomo C."/>
            <person name="Ma L.-J."/>
            <person name="Wortman J.R."/>
            <person name="Batzoglou S."/>
            <person name="Lee S.-I."/>
            <person name="Bastuerkmen M."/>
            <person name="Spevak C.C."/>
            <person name="Clutterbuck J."/>
            <person name="Kapitonov V."/>
            <person name="Jurka J."/>
            <person name="Scazzocchio C."/>
            <person name="Farman M.L."/>
            <person name="Butler J."/>
            <person name="Purcell S."/>
            <person name="Harris S."/>
            <person name="Braus G.H."/>
            <person name="Draht O."/>
            <person name="Busch S."/>
            <person name="D'Enfert C."/>
            <person name="Bouchier C."/>
            <person name="Goldman G.H."/>
            <person name="Bell-Pedersen D."/>
            <person name="Griffiths-Jones S."/>
            <person name="Doonan J.H."/>
            <person name="Yu J."/>
            <person name="Vienken K."/>
            <person name="Pain A."/>
            <person name="Freitag M."/>
            <person name="Selker E.U."/>
            <person name="Archer D.B."/>
            <person name="Penalva M.A."/>
            <person name="Oakley B.R."/>
            <person name="Momany M."/>
            <person name="Tanaka T."/>
            <person name="Kumagai T."/>
            <person name="Asai K."/>
            <person name="Machida M."/>
            <person name="Nierman W.C."/>
            <person name="Denning D.W."/>
            <person name="Caddick M.X."/>
            <person name="Hynes M."/>
            <person name="Paoletti M."/>
            <person name="Fischer R."/>
            <person name="Miller B.L."/>
            <person name="Dyer P.S."/>
            <person name="Sachs M.S."/>
            <person name="Osmani S.A."/>
            <person name="Birren B.W."/>
        </authorList>
    </citation>
    <scope>NUCLEOTIDE SEQUENCE [LARGE SCALE GENOMIC DNA]</scope>
    <source>
        <strain>FGSC A4 / ATCC 38163 / CBS 112.46 / NRRL 194 / M139</strain>
    </source>
</reference>
<reference key="4">
    <citation type="journal article" date="2009" name="Fungal Genet. Biol.">
        <title>The 2008 update of the Aspergillus nidulans genome annotation: a community effort.</title>
        <authorList>
            <person name="Wortman J.R."/>
            <person name="Gilsenan J.M."/>
            <person name="Joardar V."/>
            <person name="Deegan J."/>
            <person name="Clutterbuck J."/>
            <person name="Andersen M.R."/>
            <person name="Archer D."/>
            <person name="Bencina M."/>
            <person name="Braus G."/>
            <person name="Coutinho P."/>
            <person name="von Dohren H."/>
            <person name="Doonan J."/>
            <person name="Driessen A.J."/>
            <person name="Durek P."/>
            <person name="Espeso E."/>
            <person name="Fekete E."/>
            <person name="Flipphi M."/>
            <person name="Estrada C.G."/>
            <person name="Geysens S."/>
            <person name="Goldman G."/>
            <person name="de Groot P.W."/>
            <person name="Hansen K."/>
            <person name="Harris S.D."/>
            <person name="Heinekamp T."/>
            <person name="Helmstaedt K."/>
            <person name="Henrissat B."/>
            <person name="Hofmann G."/>
            <person name="Homan T."/>
            <person name="Horio T."/>
            <person name="Horiuchi H."/>
            <person name="James S."/>
            <person name="Jones M."/>
            <person name="Karaffa L."/>
            <person name="Karanyi Z."/>
            <person name="Kato M."/>
            <person name="Keller N."/>
            <person name="Kelly D.E."/>
            <person name="Kiel J.A."/>
            <person name="Kim J.M."/>
            <person name="van der Klei I.J."/>
            <person name="Klis F.M."/>
            <person name="Kovalchuk A."/>
            <person name="Krasevec N."/>
            <person name="Kubicek C.P."/>
            <person name="Liu B."/>
            <person name="Maccabe A."/>
            <person name="Meyer V."/>
            <person name="Mirabito P."/>
            <person name="Miskei M."/>
            <person name="Mos M."/>
            <person name="Mullins J."/>
            <person name="Nelson D.R."/>
            <person name="Nielsen J."/>
            <person name="Oakley B.R."/>
            <person name="Osmani S.A."/>
            <person name="Pakula T."/>
            <person name="Paszewski A."/>
            <person name="Paulsen I."/>
            <person name="Pilsyk S."/>
            <person name="Pocsi I."/>
            <person name="Punt P.J."/>
            <person name="Ram A.F."/>
            <person name="Ren Q."/>
            <person name="Robellet X."/>
            <person name="Robson G."/>
            <person name="Seiboth B."/>
            <person name="van Solingen P."/>
            <person name="Specht T."/>
            <person name="Sun J."/>
            <person name="Taheri-Talesh N."/>
            <person name="Takeshita N."/>
            <person name="Ussery D."/>
            <person name="vanKuyk P.A."/>
            <person name="Visser H."/>
            <person name="van de Vondervoort P.J."/>
            <person name="de Vries R.P."/>
            <person name="Walton J."/>
            <person name="Xiang X."/>
            <person name="Xiong Y."/>
            <person name="Zeng A.P."/>
            <person name="Brandt B.W."/>
            <person name="Cornell M.J."/>
            <person name="van den Hondel C.A."/>
            <person name="Visser J."/>
            <person name="Oliver S.G."/>
            <person name="Turner G."/>
        </authorList>
    </citation>
    <scope>GENOME REANNOTATION</scope>
    <source>
        <strain>FGSC A4 / ATCC 38163 / CBS 112.46 / NRRL 194 / M139</strain>
    </source>
</reference>
<reference key="5">
    <citation type="journal article" date="1995" name="Protein Sci.">
        <title>Crystallization and preliminary X-ray diffraction studies on recombinant isopenicillin N synthase from Aspergillus nidulans.</title>
        <authorList>
            <person name="Roach P.L."/>
            <person name="Schofield C.J."/>
            <person name="Baldwin J.E."/>
            <person name="Clifton I.J."/>
            <person name="Hajdu J."/>
        </authorList>
    </citation>
    <scope>CRYSTALLIZATION</scope>
</reference>
<reference evidence="18" key="6">
    <citation type="journal article" date="1995" name="Nature">
        <title>Crystal structure of isopenicillin N synthase is the first from a new structural family of enzymes.</title>
        <authorList>
            <person name="Roach P.L."/>
            <person name="Clifton I.J."/>
            <person name="Fueloep V."/>
            <person name="Harlos K."/>
            <person name="Barton G.J."/>
            <person name="Hajdu J."/>
            <person name="Andersson I."/>
            <person name="Schofield C.J."/>
            <person name="Baldwin J.E."/>
        </authorList>
    </citation>
    <scope>X-RAY CRYSTALLOGRAPHY (2.5 ANGSTROMS) IN COMPLEX WITH IRON</scope>
    <scope>COFACTOR</scope>
</reference>
<reference evidence="12 13" key="7">
    <citation type="journal article" date="1997" name="Nature">
        <title>Structure of isopenicillin N synthase complexed with substrate and the mechanism of penicillin formation.</title>
        <authorList>
            <person name="Roach P.L."/>
            <person name="Clifton I.J."/>
            <person name="Hensgens C.M."/>
            <person name="Shibata N."/>
            <person name="Schofield C.J."/>
            <person name="Hajdu J."/>
            <person name="Baldwin J.E."/>
        </authorList>
    </citation>
    <scope>X-RAY CRYSTALLOGRAPHY (1.45 ANGSTROMS) IN COMPLEX WITH IRON AND N-[(5S)-5-AMINO-5-CARBOXYPENTANOYL]-L-CYSTEINYL-D-VALINE</scope>
    <scope>COFACTOR</scope>
</reference>
<reference evidence="23 24 25" key="8">
    <citation type="journal article" date="1999" name="Nature">
        <title>The reaction cycle of isopenicillin N synthase observed by X-ray diffraction.</title>
        <authorList>
            <person name="Burzlaff N.I."/>
            <person name="Rutledge P.J."/>
            <person name="Clifton I.J."/>
            <person name="Hensgens C.M.H."/>
            <person name="Pickford M."/>
            <person name="Adlington R.M."/>
            <person name="Roach P.L."/>
            <person name="Baldwin J.E."/>
        </authorList>
    </citation>
    <scope>X-RAY CRYSTALLOGRAPHY (1.35 ANGSTROMS) IN COMPLEX WITH IRON; N-[(5S)-5-AMINO-5-CARBOXYPENTANOYL]-L-CYSTEINYL-D-VALINE AND ISOPENICILLIN N</scope>
    <scope>COFACTOR</scope>
</reference>
<reference evidence="14 15 16 17" key="9">
    <citation type="journal article" date="2001" name="Chem. Biol.">
        <title>Alternative oxidation by isopenicillin N synthase observed by X-ray diffraction.</title>
        <authorList>
            <person name="Ogle J.M."/>
            <person name="Clifton I.J."/>
            <person name="Rutledge P.J."/>
            <person name="Elkins J.M."/>
            <person name="Burzlaff N.I."/>
            <person name="Adlington R.M."/>
            <person name="Roach P.L."/>
            <person name="Baldwin J.E."/>
        </authorList>
    </citation>
    <scope>X-RAY CRYSTALLOGRAPHY (1.3 ANGSTROMS) IN COMPLEX WITH SUBSTRATE ANALOG</scope>
    <scope>FUNCTION</scope>
    <scope>CATALYTIC ACTIVITY</scope>
    <scope>PATHWAY</scope>
</reference>
<reference evidence="21 22" key="10">
    <citation type="journal article" date="2003" name="Org. Biomol. Chem.">
        <title>Crystallographic studies on the reaction of isopenicillin N synthase with an unsaturated substrate analogue.</title>
        <authorList>
            <person name="Elkins J.M."/>
            <person name="Rutledge P.J."/>
            <person name="Burzlaff N.I."/>
            <person name="Clifton I.J."/>
            <person name="Adlington R.M."/>
            <person name="Roach P.L."/>
            <person name="Baldwin J.E."/>
        </authorList>
    </citation>
    <scope>X-RAY CRYSTALLOGRAPHY (1.15 ANGSTROMS) IN COMPLEX WITH IRON AND SUBSTRATE ANALOG</scope>
</reference>
<reference evidence="19 20" key="11">
    <citation type="journal article" date="2003" name="Biochem. J.">
        <title>Structural studies on the reaction of isopenicillin N synthase with the substrate analogue delta-(l-alpha-aminoadipoyl)-l-cysteinyl-d-alpha-aminobutyrate.</title>
        <authorList>
            <person name="Long A.J."/>
            <person name="Clifton I.J."/>
            <person name="Roach P.L."/>
            <person name="Baldwin J.E."/>
            <person name="Schofield C.J."/>
            <person name="Rutledge P.J."/>
        </authorList>
    </citation>
    <scope>X-RAY CRYSTALLOGRAPHY (1.30 ANGSTROMS) IN COMPLEX WITH IRON AND SUBSTRATE ANALOG</scope>
</reference>
<reference evidence="26" key="12">
    <citation type="journal article" date="2004" name="Biochem. J.">
        <title>Active-site-mediated elimination of hydrogen fluoride from a fluorinated substrate analogue by isopenicillin N synthase.</title>
        <authorList>
            <person name="Grummitt A.R."/>
            <person name="Rutledge P.J."/>
            <person name="Clifton I.J."/>
            <person name="Baldwin J.E."/>
        </authorList>
    </citation>
    <scope>X-RAY CRYSTALLOGRAPHY (1.30 ANGSTROMS) IN COMPLEX WITH IRON AND SUBSTRATE ANALOG</scope>
</reference>
<reference evidence="34" key="13">
    <citation type="journal article" date="2005" name="Biochem. Biophys. Res. Commun.">
        <title>Unique binding of a non-natural L,L,L-substrate by isopenicillin N synthase.</title>
        <authorList>
            <person name="Howard-Jones A.R."/>
            <person name="Rutledge P.J."/>
            <person name="Clifton I.J."/>
            <person name="Adlington R.M."/>
            <person name="Baldwin J.E."/>
        </authorList>
    </citation>
    <scope>X-RAY CRYSTALLOGRAPHY (1.30 ANGSTROMS) IN COMPLEX WITH IRON AND SUBSTRATE ANALOG</scope>
</reference>
<reference evidence="27 28 29 30" key="14">
    <citation type="journal article" date="2005" name="Biochemistry">
        <title>Structural studies on the reaction of isopenicillin N synthase with the truncated substrate analogues delta-(L-alpha-aminoadipoyl)-L-cysteinyl-glycine and delta-(L-alpha-aminoadipoyl)-L-cysteinyl-D-alanine.</title>
        <authorList>
            <person name="Long A.J."/>
            <person name="Clifton I.J."/>
            <person name="Roach P.L."/>
            <person name="Baldwin J.E."/>
            <person name="Rutledge P.J."/>
            <person name="Schofield C.J."/>
        </authorList>
    </citation>
    <scope>X-RAY CRYSTALLOGRAPHY (1.28 ANGSTROMS) IN COMPLEX WITH IRON AND SUBSTRATE ANALOG</scope>
</reference>
<reference evidence="31 32" key="15">
    <citation type="journal article" date="2006" name="ChemBioChem">
        <title>Unexpected oxidation of a depsipeptide substrate analogue in crystalline isopenicillin N synthase.</title>
        <authorList>
            <person name="Daruzzaman A."/>
            <person name="Clifton I.J."/>
            <person name="Adlington R.M."/>
            <person name="Baldwin J.E."/>
            <person name="Rutledge P.J."/>
        </authorList>
    </citation>
    <scope>X-RAY CRYSTALLOGRAPHY (1.40 ANGSTROMS) IN COMPLEX WITH IRON AND SUBSTRATE ANALOG</scope>
</reference>
<reference evidence="35 36" key="16">
    <citation type="journal article" date="2007" name="Biochemistry">
        <title>Interactions of isopenicillin N synthase with cyclopropyl-containing substrate analogues reveal new mechanistic insight.</title>
        <authorList>
            <person name="Howard-Jones A.R."/>
            <person name="Elkins J.M."/>
            <person name="Clifton I.J."/>
            <person name="Roach P.L."/>
            <person name="Adlington R.M."/>
            <person name="Baldwin J.E."/>
            <person name="Rutledge P.J."/>
        </authorList>
    </citation>
    <scope>X-RAY CRYSTALLOGRAPHY (1.30 ANGSTROMS) IN COMPLEX WITH IRON AND SUBSTRATE ANALOG</scope>
</reference>
<reference evidence="37" key="17">
    <citation type="journal article" date="2007" name="ChemBioChem">
        <title>A cyclobutanone analogue mimics penicillin in binding to isopenicillin N synthase.</title>
        <authorList>
            <person name="Stewart A.C."/>
            <person name="Clifton I.J."/>
            <person name="Adlington R.M."/>
            <person name="Baldwin J.E."/>
            <person name="Rutledge P.J."/>
        </authorList>
    </citation>
    <scope>X-RAY CRYSTALLOGRAPHY (1.30 ANGSTROMS) IN COMPLEX WITH IRON AND SUBSTRATE ANALOG</scope>
</reference>
<reference evidence="38 39" key="18">
    <citation type="journal article" date="2008" name="J. Am. Chem. Soc.">
        <title>Isopenicillin N synthase mediates thiolate oxidation to sulfenate in a depsipeptide substrate analogue: implications for oxygen binding and a link to nitrile hydratase?</title>
        <authorList>
            <person name="Ge W."/>
            <person name="Clifton I.J."/>
            <person name="Stok J.E."/>
            <person name="Adlington R.M."/>
            <person name="Baldwin J.E."/>
            <person name="Rutledge P.J."/>
        </authorList>
    </citation>
    <scope>X-RAY CRYSTALLOGRAPHY (1.40 ANGSTROMS) IN COMPLEX WITH IRON AND SUBSTRATE ANALOG</scope>
</reference>
<reference evidence="42 43" key="19">
    <citation type="journal article" date="2009" name="ChemBioChem">
        <title>Structural studies on the reaction of isopenicillin N synthase with a sterically demanding depsipeptide substrate analogue.</title>
        <authorList>
            <person name="Ge W."/>
            <person name="Clifton I.J."/>
            <person name="Howard-Jones A.R."/>
            <person name="Stok J.E."/>
            <person name="Adlington R.M."/>
            <person name="Baldwin J.E."/>
            <person name="Rutledge P.J."/>
        </authorList>
    </citation>
    <scope>X-RAY CRYSTALLOGRAPHY (1.65 ANGSTROMS) IN COMPLEX WITH IRON AND SUBSTRATE ANALOG</scope>
</reference>
<reference evidence="41 44" key="20">
    <citation type="journal article" date="2010" name="Biochem. Biophys. Res. Commun.">
        <title>Crystallographic studies on the binding of selectively deuterated LLD- and LLL-substrate epimers by isopenicillin N synthase.</title>
        <authorList>
            <person name="Ge W."/>
            <person name="Clifton I.J."/>
            <person name="Stok J.E."/>
            <person name="Adlington R.M."/>
            <person name="Baldwin J.E."/>
            <person name="Rutledge P.J."/>
        </authorList>
    </citation>
    <scope>X-RAY CRYSTALLOGRAPHY (1.50 ANGSTROMS) IN COMPLEX WITH IRON AND SUBSTRATE ANALOG</scope>
</reference>
<reference evidence="40" key="21">
    <citation type="journal article" date="2010" name="Org. Biomol. Chem.">
        <title>The crystal structure of an LLL-configured depsipeptide substrate analogue bound to isopenicillin N synthase.</title>
        <authorList>
            <person name="Ge W."/>
            <person name="Clifton I.J."/>
            <person name="Stok J.E."/>
            <person name="Adlington R.M."/>
            <person name="Baldwin J.E."/>
            <person name="Rutledge P.J."/>
        </authorList>
    </citation>
    <scope>X-RAY CRYSTALLOGRAPHY (2.00 ANGSTROMS) IN COMPLEX WITH IRON AND SUBSTRATE ANALOG</scope>
</reference>
<reference evidence="45" key="22">
    <citation type="journal article" date="2011" name="Arch. Biochem. Biophys.">
        <title>The crystal structure of isopenicillin N synthase with delta-((L)-alpha-aminoadipoyl)-(L)-cysteinyl-(D)-methionine reveals thioether coordination to iron.</title>
        <authorList>
            <person name="Clifton I.J."/>
            <person name="Ge W."/>
            <person name="Adlington R.M."/>
            <person name="Baldwin J.E."/>
            <person name="Rutledge P.J."/>
        </authorList>
    </citation>
    <scope>X-RAY CRYSTALLOGRAPHY (1.40 ANGSTROMS) IN COMPLEX WITH IRON AND SUBSTRATE ANALOG</scope>
</reference>
<reference evidence="46" key="23">
    <citation type="journal article" date="2011" name="ChemBioChem">
        <title>Isopenicillin N synthase binds delta-(L-alpha-aminoadipoyl)-L-cysteinyl-D-thia-allo-isoleucine through both sulfur atoms.</title>
        <authorList>
            <person name="Clifton I.J."/>
            <person name="Ge W."/>
            <person name="Adlington R.M."/>
            <person name="Baldwin J.E."/>
            <person name="Rutledge P.J."/>
        </authorList>
    </citation>
    <scope>X-RAY CRYSTALLOGRAPHY (1.79 ANGSTROMS) IN COMPLEX WITH IRON AND SUBSTRATE ANALOG</scope>
</reference>
<reference evidence="50" key="24">
    <citation type="journal article" date="2013" name="Arch. Biochem. Biophys.">
        <title>The crystal structure of isopenicillin N synthase with a dipeptide substrate analogue.</title>
        <authorList>
            <person name="Daruzzaman A."/>
            <person name="Clifton I.J."/>
            <person name="Adlington R.M."/>
            <person name="Baldwin J.E."/>
            <person name="Rutledge P.J."/>
        </authorList>
    </citation>
    <scope>X-RAY CRYSTALLOGRAPHY (1.40 ANGSTROMS) IN COMPLEX WITH IRON AND SUBSTRATE ANALOG</scope>
</reference>
<reference evidence="47 48" key="25">
    <citation type="journal article" date="2013" name="ChemBioChem">
        <title>The interaction of isopenicillin N synthase with homologated substrate analogues delta-(L-alpha-aminoadipoyl)-L-homocysteinyl-D-Xaa characterised by protein crystallography.</title>
        <authorList>
            <person name="Daruzzaman A."/>
            <person name="Clifton I.J."/>
            <person name="Adlington R.M."/>
            <person name="Baldwin J.E."/>
            <person name="Rutledge P.J."/>
        </authorList>
    </citation>
    <scope>X-RAY CRYSTALLOGRAPHY (1.40 ANGSTROMS) IN COMPLEX WITH IRON AND SUBSTRATE ANALOGS</scope>
</reference>
<reference evidence="49" key="26">
    <citation type="journal article" date="2013" name="FEBS Lett.">
        <title>The crystal structure of an isopenicillin N synthase complex with an ethereal substrate analogue reveals water in the oxygen binding site.</title>
        <authorList>
            <person name="Clifton I.J."/>
            <person name="Ge W."/>
            <person name="Adlington R.M."/>
            <person name="Baldwin J.E."/>
            <person name="Rutledge P.J."/>
        </authorList>
    </citation>
    <scope>X-RAY CRYSTALLOGRAPHY (1.82 ANGSTROMS) IN COMPLEX WITH IRON AND SUBSTRATE ANALOG</scope>
</reference>
<reference evidence="33" key="27">
    <citation type="journal article" date="2017" name="Chemistry">
        <title>Terminally truncated isopenicillin N synthase generates a dithioester product: evidence for a thioaldehyde intermediate during catalysis and a new mode of reaction for non-Heme iron oxidases.</title>
        <authorList>
            <person name="McNeill L.A."/>
            <person name="Brown T.J.N."/>
            <person name="Sami M."/>
            <person name="Clifton I.J."/>
            <person name="Burzlaff N.I."/>
            <person name="Claridge T.D.W."/>
            <person name="Adlington R.M."/>
            <person name="Baldwin J.E."/>
            <person name="Rutledge P.J."/>
            <person name="Schofield C.J."/>
        </authorList>
    </citation>
    <scope>X-RAY CRYSTALLOGRAPHY (1.30 ANGSTROMS) OF 1-325 IN COMPLEX WITH IRON AND N-[(5S)-5-AMINO-5-CARBOXYPENTANOYL]-L-CYSTEINYL-D-VALINE</scope>
    <scope>FUNCTION</scope>
    <scope>CATALYTIC ACTIVITY</scope>
    <scope>MUTAGENESIS OF LYS-98; LEU-223; LEU-231; VAL-272 AND PRO-283</scope>
</reference>
<reference evidence="51" key="28">
    <citation type="journal article" date="2020" name="IUCrJ">
        <title>Anaerobic fixed-target serial crystallography.</title>
        <authorList>
            <person name="Rabe P."/>
            <person name="Beale J.H."/>
            <person name="Butryn A."/>
            <person name="Aller P."/>
            <person name="Dirr A."/>
            <person name="Lang P.A."/>
            <person name="Axford D.N."/>
            <person name="Carr S.B."/>
            <person name="Leissing T.M."/>
            <person name="McDonough M.A."/>
            <person name="Davy B."/>
            <person name="Ebrahim A."/>
            <person name="Orlans J."/>
            <person name="Storm S.L.S."/>
            <person name="Orville A.M."/>
            <person name="Schofield C.J."/>
            <person name="Owen R.L."/>
        </authorList>
    </citation>
    <scope>X-RAY CRYSTALLOGRAPHY (2.20 ANGSTROMS)</scope>
</reference>
<reference evidence="52" key="29">
    <citation type="submission" date="2020-06" db="PDB data bank">
        <title>Room temperature XFEL isopenicillin N synthase structure in complex with the Fe(IV)=O mimic VO and ACV.</title>
        <authorList>
            <person name="Rabe P."/>
            <person name="Kamps J.J.A.G."/>
            <person name="Sutherlin K."/>
            <person name="Pharm C."/>
            <person name="McDonough M.A."/>
            <person name="Leissing T.M."/>
            <person name="Aller P."/>
            <person name="Butryn A."/>
            <person name="Linyard J."/>
            <person name="Lang P."/>
            <person name="Brem J."/>
            <person name="Fuller F.D."/>
            <person name="Batyuk A."/>
            <person name="Hunter M.S."/>
            <person name="Pettinati I."/>
            <person name="Clifton I.J."/>
            <person name="Alonso-Mori R."/>
            <person name="Gul S."/>
            <person name="Young I."/>
            <person name="Kim I."/>
            <person name="Bhowmick A."/>
            <person name="O'Riordan L."/>
            <person name="Brewster A.S."/>
            <person name="Claridge T.D.W."/>
            <person name="Sauter N.K."/>
            <person name="Yachandra V."/>
            <person name="Yano J."/>
            <person name="Kern J.F."/>
            <person name="Orville A.M."/>
            <person name="Schofield C.J."/>
        </authorList>
    </citation>
    <scope>X-RAY CRYSTALLOGRAPHY (1.54 ANGSTROMS) IN COMPLEX WITH IRON AND SUBSTRATE ANALOG</scope>
</reference>
<reference key="30">
    <citation type="journal article" date="2021" name="Sci. Adv.">
        <title>X-ray free-electron laser studies reveal correlated motion during isopenicillin N synthase catalysis.</title>
        <authorList>
            <person name="Rabe P."/>
            <person name="Kamps J.J.A.G."/>
            <person name="Sutherlin K.D."/>
            <person name="Linyard J.D.S."/>
            <person name="Aller P."/>
            <person name="Pham C.C."/>
            <person name="Makita H."/>
            <person name="Clifton I."/>
            <person name="McDonough M.A."/>
            <person name="Leissing T.M."/>
            <person name="Shutin D."/>
            <person name="Lang P.A."/>
            <person name="Butryn A."/>
            <person name="Brem J."/>
            <person name="Gul S."/>
            <person name="Fuller F.D."/>
            <person name="Kim I.S."/>
            <person name="Cheah M.H."/>
            <person name="Fransson T."/>
            <person name="Bhowmick A."/>
            <person name="Young I.D."/>
            <person name="O'Riordan L."/>
            <person name="Brewster A.S."/>
            <person name="Pettinati I."/>
            <person name="Doyle M."/>
            <person name="Joti Y."/>
            <person name="Owada S."/>
            <person name="Tono K."/>
            <person name="Batyuk A."/>
            <person name="Hunter M.S."/>
            <person name="Alonso-Mori R."/>
            <person name="Bergmann U."/>
            <person name="Owen R.L."/>
            <person name="Sauter N.K."/>
            <person name="Claridge T.D.W."/>
            <person name="Robinson C.V."/>
            <person name="Yachandra V.K."/>
            <person name="Yano J."/>
            <person name="Kern J.F."/>
            <person name="Orville A.M."/>
            <person name="Schofield C.J."/>
        </authorList>
    </citation>
    <scope>X-RAY CRYSTALLOGRAPHY (1.22 ANGSTROMS) IN COMPLEX WITH IRON AND SUBSTRATE ANALOG</scope>
</reference>
<evidence type="ECO:0000250" key="1">
    <source>
        <dbReference type="UniProtKB" id="P05189"/>
    </source>
</evidence>
<evidence type="ECO:0000250" key="2">
    <source>
        <dbReference type="UniProtKB" id="P08703"/>
    </source>
</evidence>
<evidence type="ECO:0000255" key="3">
    <source>
        <dbReference type="PROSITE-ProRule" id="PRU00805"/>
    </source>
</evidence>
<evidence type="ECO:0000269" key="4">
    <source>
    </source>
</evidence>
<evidence type="ECO:0000269" key="5">
    <source>
    </source>
</evidence>
<evidence type="ECO:0000269" key="6">
    <source>
    </source>
</evidence>
<evidence type="ECO:0000269" key="7">
    <source>
    </source>
</evidence>
<evidence type="ECO:0000269" key="8">
    <source>
    </source>
</evidence>
<evidence type="ECO:0000269" key="9">
    <source>
    </source>
</evidence>
<evidence type="ECO:0000303" key="10">
    <source>
    </source>
</evidence>
<evidence type="ECO:0000305" key="11"/>
<evidence type="ECO:0007744" key="12">
    <source>
        <dbReference type="PDB" id="1BK0"/>
    </source>
</evidence>
<evidence type="ECO:0007744" key="13">
    <source>
        <dbReference type="PDB" id="1BLZ"/>
    </source>
</evidence>
<evidence type="ECO:0007744" key="14">
    <source>
        <dbReference type="PDB" id="1HB1"/>
    </source>
</evidence>
<evidence type="ECO:0007744" key="15">
    <source>
        <dbReference type="PDB" id="1HB2"/>
    </source>
</evidence>
<evidence type="ECO:0007744" key="16">
    <source>
        <dbReference type="PDB" id="1HB3"/>
    </source>
</evidence>
<evidence type="ECO:0007744" key="17">
    <source>
        <dbReference type="PDB" id="1HB4"/>
    </source>
</evidence>
<evidence type="ECO:0007744" key="18">
    <source>
        <dbReference type="PDB" id="1IPS"/>
    </source>
</evidence>
<evidence type="ECO:0007744" key="19">
    <source>
        <dbReference type="PDB" id="1OBN"/>
    </source>
</evidence>
<evidence type="ECO:0007744" key="20">
    <source>
        <dbReference type="PDB" id="1OC1"/>
    </source>
</evidence>
<evidence type="ECO:0007744" key="21">
    <source>
        <dbReference type="PDB" id="1ODM"/>
    </source>
</evidence>
<evidence type="ECO:0007744" key="22">
    <source>
        <dbReference type="PDB" id="1ODN"/>
    </source>
</evidence>
<evidence type="ECO:0007744" key="23">
    <source>
        <dbReference type="PDB" id="1QIQ"/>
    </source>
</evidence>
<evidence type="ECO:0007744" key="24">
    <source>
        <dbReference type="PDB" id="1QJE"/>
    </source>
</evidence>
<evidence type="ECO:0007744" key="25">
    <source>
        <dbReference type="PDB" id="1QJF"/>
    </source>
</evidence>
<evidence type="ECO:0007744" key="26">
    <source>
        <dbReference type="PDB" id="1UZW"/>
    </source>
</evidence>
<evidence type="ECO:0007744" key="27">
    <source>
        <dbReference type="PDB" id="1W03"/>
    </source>
</evidence>
<evidence type="ECO:0007744" key="28">
    <source>
        <dbReference type="PDB" id="1W04"/>
    </source>
</evidence>
<evidence type="ECO:0007744" key="29">
    <source>
        <dbReference type="PDB" id="1W05"/>
    </source>
</evidence>
<evidence type="ECO:0007744" key="30">
    <source>
        <dbReference type="PDB" id="1W06"/>
    </source>
</evidence>
<evidence type="ECO:0007744" key="31">
    <source>
        <dbReference type="PDB" id="1W3V"/>
    </source>
</evidence>
<evidence type="ECO:0007744" key="32">
    <source>
        <dbReference type="PDB" id="1W3X"/>
    </source>
</evidence>
<evidence type="ECO:0007744" key="33">
    <source>
        <dbReference type="PDB" id="2BJS"/>
    </source>
</evidence>
<evidence type="ECO:0007744" key="34">
    <source>
        <dbReference type="PDB" id="2BU9"/>
    </source>
</evidence>
<evidence type="ECO:0007744" key="35">
    <source>
        <dbReference type="PDB" id="2IVI"/>
    </source>
</evidence>
<evidence type="ECO:0007744" key="36">
    <source>
        <dbReference type="PDB" id="2IVJ"/>
    </source>
</evidence>
<evidence type="ECO:0007744" key="37">
    <source>
        <dbReference type="PDB" id="2JB4"/>
    </source>
</evidence>
<evidence type="ECO:0007744" key="38">
    <source>
        <dbReference type="PDB" id="2VAU"/>
    </source>
</evidence>
<evidence type="ECO:0007744" key="39">
    <source>
        <dbReference type="PDB" id="2VBB"/>
    </source>
</evidence>
<evidence type="ECO:0007744" key="40">
    <source>
        <dbReference type="PDB" id="2VBD"/>
    </source>
</evidence>
<evidence type="ECO:0007744" key="41">
    <source>
        <dbReference type="PDB" id="2VBP"/>
    </source>
</evidence>
<evidence type="ECO:0007744" key="42">
    <source>
        <dbReference type="PDB" id="2VCM"/>
    </source>
</evidence>
<evidence type="ECO:0007744" key="43">
    <source>
        <dbReference type="PDB" id="2VE1"/>
    </source>
</evidence>
<evidence type="ECO:0007744" key="44">
    <source>
        <dbReference type="PDB" id="2WO7"/>
    </source>
</evidence>
<evidence type="ECO:0007744" key="45">
    <source>
        <dbReference type="PDB" id="2Y60"/>
    </source>
</evidence>
<evidence type="ECO:0007744" key="46">
    <source>
        <dbReference type="PDB" id="2Y6F"/>
    </source>
</evidence>
<evidence type="ECO:0007744" key="47">
    <source>
        <dbReference type="PDB" id="3ZKU"/>
    </source>
</evidence>
<evidence type="ECO:0007744" key="48">
    <source>
        <dbReference type="PDB" id="3ZKY"/>
    </source>
</evidence>
<evidence type="ECO:0007744" key="49">
    <source>
        <dbReference type="PDB" id="3ZOI"/>
    </source>
</evidence>
<evidence type="ECO:0007744" key="50">
    <source>
        <dbReference type="PDB" id="4BB3"/>
    </source>
</evidence>
<evidence type="ECO:0007744" key="51">
    <source>
        <dbReference type="PDB" id="6Y0O"/>
    </source>
</evidence>
<evidence type="ECO:0007744" key="52">
    <source>
        <dbReference type="PDB" id="6ZAK"/>
    </source>
</evidence>
<evidence type="ECO:0007829" key="53">
    <source>
        <dbReference type="PDB" id="1ODM"/>
    </source>
</evidence>
<evidence type="ECO:0007829" key="54">
    <source>
        <dbReference type="PDB" id="6ZAQ"/>
    </source>
</evidence>
<dbReference type="EC" id="1.21.3.1" evidence="7"/>
<dbReference type="EMBL" id="M18111">
    <property type="protein sequence ID" value="AAA33311.1"/>
    <property type="molecule type" value="Genomic_DNA"/>
</dbReference>
<dbReference type="EMBL" id="M21882">
    <property type="protein sequence ID" value="AAA33310.1"/>
    <property type="molecule type" value="Genomic_DNA"/>
</dbReference>
<dbReference type="EMBL" id="AACD01000045">
    <property type="protein sequence ID" value="EAA62969.1"/>
    <property type="molecule type" value="Genomic_DNA"/>
</dbReference>
<dbReference type="EMBL" id="BN001306">
    <property type="protein sequence ID" value="CBF84347.1"/>
    <property type="molecule type" value="Genomic_DNA"/>
</dbReference>
<dbReference type="PIR" id="A27355">
    <property type="entry name" value="A27355"/>
</dbReference>
<dbReference type="RefSeq" id="XP_660226.1">
    <property type="nucleotide sequence ID" value="XM_655134.1"/>
</dbReference>
<dbReference type="PDB" id="1BK0">
    <property type="method" value="X-ray"/>
    <property type="resolution" value="1.30 A"/>
    <property type="chains" value="A=1-331"/>
</dbReference>
<dbReference type="PDB" id="1BLZ">
    <property type="method" value="X-ray"/>
    <property type="resolution" value="1.45 A"/>
    <property type="chains" value="A=1-331"/>
</dbReference>
<dbReference type="PDB" id="1HB1">
    <property type="method" value="X-ray"/>
    <property type="resolution" value="1.55 A"/>
    <property type="chains" value="A=1-331"/>
</dbReference>
<dbReference type="PDB" id="1HB2">
    <property type="method" value="X-ray"/>
    <property type="resolution" value="1.30 A"/>
    <property type="chains" value="A=1-331"/>
</dbReference>
<dbReference type="PDB" id="1HB3">
    <property type="method" value="X-ray"/>
    <property type="resolution" value="1.40 A"/>
    <property type="chains" value="A=1-331"/>
</dbReference>
<dbReference type="PDB" id="1HB4">
    <property type="method" value="X-ray"/>
    <property type="resolution" value="1.50 A"/>
    <property type="chains" value="A=1-331"/>
</dbReference>
<dbReference type="PDB" id="1IPS">
    <property type="method" value="X-ray"/>
    <property type="resolution" value="2.50 A"/>
    <property type="chains" value="A/B=1-331"/>
</dbReference>
<dbReference type="PDB" id="1OBN">
    <property type="method" value="X-ray"/>
    <property type="resolution" value="1.30 A"/>
    <property type="chains" value="A=1-331"/>
</dbReference>
<dbReference type="PDB" id="1OC1">
    <property type="method" value="X-ray"/>
    <property type="resolution" value="2.20 A"/>
    <property type="chains" value="A=1-331"/>
</dbReference>
<dbReference type="PDB" id="1ODM">
    <property type="method" value="X-ray"/>
    <property type="resolution" value="1.15 A"/>
    <property type="chains" value="A=1-331"/>
</dbReference>
<dbReference type="PDB" id="1ODN">
    <property type="method" value="X-ray"/>
    <property type="resolution" value="1.60 A"/>
    <property type="chains" value="A=1-331"/>
</dbReference>
<dbReference type="PDB" id="1QIQ">
    <property type="method" value="X-ray"/>
    <property type="resolution" value="1.50 A"/>
    <property type="chains" value="A=1-331"/>
</dbReference>
<dbReference type="PDB" id="1QJE">
    <property type="method" value="X-ray"/>
    <property type="resolution" value="1.35 A"/>
    <property type="chains" value="A=1-331"/>
</dbReference>
<dbReference type="PDB" id="1QJF">
    <property type="method" value="X-ray"/>
    <property type="resolution" value="1.40 A"/>
    <property type="chains" value="A=1-331"/>
</dbReference>
<dbReference type="PDB" id="1UZW">
    <property type="method" value="X-ray"/>
    <property type="resolution" value="1.30 A"/>
    <property type="chains" value="A=1-331"/>
</dbReference>
<dbReference type="PDB" id="1W03">
    <property type="method" value="X-ray"/>
    <property type="resolution" value="2.10 A"/>
    <property type="chains" value="A=1-331"/>
</dbReference>
<dbReference type="PDB" id="1W04">
    <property type="method" value="X-ray"/>
    <property type="resolution" value="1.28 A"/>
    <property type="chains" value="A=1-331"/>
</dbReference>
<dbReference type="PDB" id="1W05">
    <property type="method" value="X-ray"/>
    <property type="resolution" value="2.46 A"/>
    <property type="chains" value="A=1-331"/>
</dbReference>
<dbReference type="PDB" id="1W06">
    <property type="method" value="X-ray"/>
    <property type="resolution" value="1.65 A"/>
    <property type="chains" value="A=1-331"/>
</dbReference>
<dbReference type="PDB" id="1W3V">
    <property type="method" value="X-ray"/>
    <property type="resolution" value="1.40 A"/>
    <property type="chains" value="A=1-331"/>
</dbReference>
<dbReference type="PDB" id="1W3X">
    <property type="method" value="X-ray"/>
    <property type="resolution" value="1.46 A"/>
    <property type="chains" value="A=1-331"/>
</dbReference>
<dbReference type="PDB" id="2BJS">
    <property type="method" value="X-ray"/>
    <property type="resolution" value="1.30 A"/>
    <property type="chains" value="A=1-325"/>
</dbReference>
<dbReference type="PDB" id="2BU9">
    <property type="method" value="X-ray"/>
    <property type="resolution" value="1.30 A"/>
    <property type="chains" value="A=1-331"/>
</dbReference>
<dbReference type="PDB" id="2IVI">
    <property type="method" value="X-ray"/>
    <property type="resolution" value="1.30 A"/>
    <property type="chains" value="B=1-331"/>
</dbReference>
<dbReference type="PDB" id="2IVJ">
    <property type="method" value="X-ray"/>
    <property type="resolution" value="1.46 A"/>
    <property type="chains" value="A=1-331"/>
</dbReference>
<dbReference type="PDB" id="2JB4">
    <property type="method" value="X-ray"/>
    <property type="resolution" value="1.30 A"/>
    <property type="chains" value="A=1-331"/>
</dbReference>
<dbReference type="PDB" id="2VAU">
    <property type="method" value="X-ray"/>
    <property type="resolution" value="1.80 A"/>
    <property type="chains" value="A=1-331"/>
</dbReference>
<dbReference type="PDB" id="2VBB">
    <property type="method" value="X-ray"/>
    <property type="resolution" value="1.40 A"/>
    <property type="chains" value="A=1-331"/>
</dbReference>
<dbReference type="PDB" id="2VBD">
    <property type="method" value="X-ray"/>
    <property type="resolution" value="2.00 A"/>
    <property type="chains" value="A=1-331"/>
</dbReference>
<dbReference type="PDB" id="2VBP">
    <property type="method" value="X-ray"/>
    <property type="resolution" value="1.50 A"/>
    <property type="chains" value="A=1-331"/>
</dbReference>
<dbReference type="PDB" id="2VCM">
    <property type="method" value="X-ray"/>
    <property type="resolution" value="1.65 A"/>
    <property type="chains" value="A=1-331"/>
</dbReference>
<dbReference type="PDB" id="2VE1">
    <property type="method" value="X-ray"/>
    <property type="resolution" value="2.20 A"/>
    <property type="chains" value="A=1-331"/>
</dbReference>
<dbReference type="PDB" id="2WO7">
    <property type="method" value="X-ray"/>
    <property type="resolution" value="2.50 A"/>
    <property type="chains" value="A=1-331"/>
</dbReference>
<dbReference type="PDB" id="2Y60">
    <property type="method" value="X-ray"/>
    <property type="resolution" value="1.40 A"/>
    <property type="chains" value="A=1-331"/>
</dbReference>
<dbReference type="PDB" id="2Y6F">
    <property type="method" value="X-ray"/>
    <property type="resolution" value="1.79 A"/>
    <property type="chains" value="A=1-331"/>
</dbReference>
<dbReference type="PDB" id="3ZKU">
    <property type="method" value="X-ray"/>
    <property type="resolution" value="1.40 A"/>
    <property type="chains" value="A=1-331"/>
</dbReference>
<dbReference type="PDB" id="3ZKY">
    <property type="method" value="X-ray"/>
    <property type="resolution" value="1.45 A"/>
    <property type="chains" value="A=1-331"/>
</dbReference>
<dbReference type="PDB" id="3ZOI">
    <property type="method" value="X-ray"/>
    <property type="resolution" value="1.82 A"/>
    <property type="chains" value="A=1-331"/>
</dbReference>
<dbReference type="PDB" id="4BB3">
    <property type="method" value="X-ray"/>
    <property type="resolution" value="1.40 A"/>
    <property type="chains" value="A=1-331"/>
</dbReference>
<dbReference type="PDB" id="6Y0O">
    <property type="method" value="X-ray"/>
    <property type="resolution" value="2.20 A"/>
    <property type="chains" value="A=1-331"/>
</dbReference>
<dbReference type="PDB" id="6Y0P">
    <property type="method" value="X-ray"/>
    <property type="resolution" value="1.98 A"/>
    <property type="chains" value="A=1-331"/>
</dbReference>
<dbReference type="PDB" id="6ZAE">
    <property type="method" value="X-ray"/>
    <property type="resolution" value="1.40 A"/>
    <property type="chains" value="A=1-331"/>
</dbReference>
<dbReference type="PDB" id="6ZAF">
    <property type="method" value="X-ray"/>
    <property type="resolution" value="1.40 A"/>
    <property type="chains" value="A=1-331"/>
</dbReference>
<dbReference type="PDB" id="6ZAG">
    <property type="method" value="X-ray"/>
    <property type="resolution" value="1.40 A"/>
    <property type="chains" value="A=1-331"/>
</dbReference>
<dbReference type="PDB" id="6ZAH">
    <property type="method" value="X-ray"/>
    <property type="resolution" value="1.43 A"/>
    <property type="chains" value="A=1-331"/>
</dbReference>
<dbReference type="PDB" id="6ZAI">
    <property type="method" value="X-ray"/>
    <property type="resolution" value="1.55 A"/>
    <property type="chains" value="A=1-331"/>
</dbReference>
<dbReference type="PDB" id="6ZAJ">
    <property type="method" value="X-ray"/>
    <property type="resolution" value="1.53 A"/>
    <property type="chains" value="A=1-331"/>
</dbReference>
<dbReference type="PDB" id="6ZAK">
    <property type="method" value="X-ray"/>
    <property type="resolution" value="1.54 A"/>
    <property type="chains" value="A=1-331"/>
</dbReference>
<dbReference type="PDB" id="6ZAL">
    <property type="method" value="X-ray"/>
    <property type="resolution" value="1.83 A"/>
    <property type="chains" value="A=1-331"/>
</dbReference>
<dbReference type="PDB" id="6ZAM">
    <property type="method" value="X-ray"/>
    <property type="resolution" value="1.55 A"/>
    <property type="chains" value="A=1-331"/>
</dbReference>
<dbReference type="PDB" id="6ZAN">
    <property type="method" value="X-ray"/>
    <property type="resolution" value="1.35 A"/>
    <property type="chains" value="A=1-331"/>
</dbReference>
<dbReference type="PDB" id="6ZAO">
    <property type="method" value="X-ray"/>
    <property type="resolution" value="1.66 A"/>
    <property type="chains" value="A=1-331"/>
</dbReference>
<dbReference type="PDB" id="6ZAP">
    <property type="method" value="X-ray"/>
    <property type="resolution" value="1.36 A"/>
    <property type="chains" value="A=1-331"/>
</dbReference>
<dbReference type="PDB" id="6ZAQ">
    <property type="method" value="X-ray"/>
    <property type="resolution" value="1.60 A"/>
    <property type="chains" value="A=1-331"/>
</dbReference>
<dbReference type="PDB" id="6ZW8">
    <property type="method" value="X-ray"/>
    <property type="resolution" value="1.22 A"/>
    <property type="chains" value="A=1-331"/>
</dbReference>
<dbReference type="PDB" id="7P3L">
    <property type="method" value="X-ray"/>
    <property type="resolution" value="1.32 A"/>
    <property type="chains" value="A=1-331"/>
</dbReference>
<dbReference type="PDB" id="7POY">
    <property type="method" value="X-ray"/>
    <property type="resolution" value="1.75 A"/>
    <property type="chains" value="A=1-331"/>
</dbReference>
<dbReference type="PDB" id="7PSW">
    <property type="method" value="X-ray"/>
    <property type="resolution" value="1.21 A"/>
    <property type="chains" value="A=1-331"/>
</dbReference>
<dbReference type="PDB" id="7ZOE">
    <property type="method" value="X-ray"/>
    <property type="resolution" value="1.50 A"/>
    <property type="chains" value="A=1-331"/>
</dbReference>
<dbReference type="PDB" id="8A4G">
    <property type="method" value="X-ray"/>
    <property type="resolution" value="1.97 A"/>
    <property type="chains" value="A=1-331"/>
</dbReference>
<dbReference type="PDB" id="8ALI">
    <property type="method" value="X-ray"/>
    <property type="resolution" value="1.60 A"/>
    <property type="chains" value="A=1-331"/>
</dbReference>
<dbReference type="PDB" id="8ALJ">
    <property type="method" value="X-ray"/>
    <property type="resolution" value="1.68 A"/>
    <property type="chains" value="A=1-331"/>
</dbReference>
<dbReference type="PDB" id="8BB9">
    <property type="method" value="X-ray"/>
    <property type="resolution" value="1.68 A"/>
    <property type="chains" value="A=1-331"/>
</dbReference>
<dbReference type="PDB" id="8BBA">
    <property type="method" value="X-ray"/>
    <property type="resolution" value="1.50 A"/>
    <property type="chains" value="A=1-331"/>
</dbReference>
<dbReference type="PDB" id="8BBB">
    <property type="method" value="X-ray"/>
    <property type="resolution" value="1.57 A"/>
    <property type="chains" value="A=1-331"/>
</dbReference>
<dbReference type="PDB" id="8BBC">
    <property type="method" value="X-ray"/>
    <property type="resolution" value="1.71 A"/>
    <property type="chains" value="A=1-331"/>
</dbReference>
<dbReference type="PDB" id="8BBD">
    <property type="method" value="X-ray"/>
    <property type="resolution" value="1.81 A"/>
    <property type="chains" value="A=1-331"/>
</dbReference>
<dbReference type="PDB" id="8BSV">
    <property type="method" value="X-ray"/>
    <property type="resolution" value="1.53 A"/>
    <property type="chains" value="A=1-331"/>
</dbReference>
<dbReference type="PDB" id="8BSW">
    <property type="method" value="X-ray"/>
    <property type="resolution" value="1.58 A"/>
    <property type="chains" value="A=1-331"/>
</dbReference>
<dbReference type="PDB" id="8BSX">
    <property type="method" value="X-ray"/>
    <property type="resolution" value="1.38 A"/>
    <property type="chains" value="A=1-331"/>
</dbReference>
<dbReference type="PDB" id="8BSY">
    <property type="method" value="X-ray"/>
    <property type="resolution" value="1.40 A"/>
    <property type="chains" value="A=1-331"/>
</dbReference>
<dbReference type="PDB" id="8P46">
    <property type="method" value="X-ray"/>
    <property type="resolution" value="1.77 A"/>
    <property type="chains" value="A=1-331"/>
</dbReference>
<dbReference type="PDB" id="8P47">
    <property type="method" value="X-ray"/>
    <property type="resolution" value="1.56 A"/>
    <property type="chains" value="A=1-331"/>
</dbReference>
<dbReference type="PDB" id="8P48">
    <property type="method" value="X-ray"/>
    <property type="resolution" value="1.63 A"/>
    <property type="chains" value="A=1-331"/>
</dbReference>
<dbReference type="PDB" id="8P7O">
    <property type="method" value="X-ray"/>
    <property type="resolution" value="1.70 A"/>
    <property type="chains" value="A=1-331"/>
</dbReference>
<dbReference type="PDB" id="8P7P">
    <property type="method" value="X-ray"/>
    <property type="resolution" value="1.80 A"/>
    <property type="chains" value="A=1-331"/>
</dbReference>
<dbReference type="PDB" id="8PTV">
    <property type="method" value="X-ray"/>
    <property type="resolution" value="1.60 A"/>
    <property type="chains" value="A=1-331"/>
</dbReference>
<dbReference type="PDB" id="8PY5">
    <property type="method" value="X-ray"/>
    <property type="resolution" value="1.85 A"/>
    <property type="chains" value="A=1-331"/>
</dbReference>
<dbReference type="PDB" id="8PY6">
    <property type="method" value="X-ray"/>
    <property type="resolution" value="1.52 A"/>
    <property type="chains" value="A=1-331"/>
</dbReference>
<dbReference type="PDB" id="8PY7">
    <property type="method" value="X-ray"/>
    <property type="resolution" value="1.49 A"/>
    <property type="chains" value="A=1-331"/>
</dbReference>
<dbReference type="PDB" id="8PY8">
    <property type="method" value="X-ray"/>
    <property type="resolution" value="1.46 A"/>
    <property type="chains" value="A=1-331"/>
</dbReference>
<dbReference type="PDB" id="8PY9">
    <property type="method" value="X-ray"/>
    <property type="resolution" value="1.50 A"/>
    <property type="chains" value="A=1-331"/>
</dbReference>
<dbReference type="PDB" id="8PYA">
    <property type="method" value="X-ray"/>
    <property type="resolution" value="1.50 A"/>
    <property type="chains" value="A=1-331"/>
</dbReference>
<dbReference type="PDB" id="8RDB">
    <property type="method" value="X-ray"/>
    <property type="resolution" value="1.37 A"/>
    <property type="chains" value="A=1-331"/>
</dbReference>
<dbReference type="PDBsum" id="1BK0"/>
<dbReference type="PDBsum" id="1BLZ"/>
<dbReference type="PDBsum" id="1HB1"/>
<dbReference type="PDBsum" id="1HB2"/>
<dbReference type="PDBsum" id="1HB3"/>
<dbReference type="PDBsum" id="1HB4"/>
<dbReference type="PDBsum" id="1IPS"/>
<dbReference type="PDBsum" id="1OBN"/>
<dbReference type="PDBsum" id="1OC1"/>
<dbReference type="PDBsum" id="1ODM"/>
<dbReference type="PDBsum" id="1ODN"/>
<dbReference type="PDBsum" id="1QIQ"/>
<dbReference type="PDBsum" id="1QJE"/>
<dbReference type="PDBsum" id="1QJF"/>
<dbReference type="PDBsum" id="1UZW"/>
<dbReference type="PDBsum" id="1W03"/>
<dbReference type="PDBsum" id="1W04"/>
<dbReference type="PDBsum" id="1W05"/>
<dbReference type="PDBsum" id="1W06"/>
<dbReference type="PDBsum" id="1W3V"/>
<dbReference type="PDBsum" id="1W3X"/>
<dbReference type="PDBsum" id="2BJS"/>
<dbReference type="PDBsum" id="2BU9"/>
<dbReference type="PDBsum" id="2IVI"/>
<dbReference type="PDBsum" id="2IVJ"/>
<dbReference type="PDBsum" id="2JB4"/>
<dbReference type="PDBsum" id="2VAU"/>
<dbReference type="PDBsum" id="2VBB"/>
<dbReference type="PDBsum" id="2VBD"/>
<dbReference type="PDBsum" id="2VBP"/>
<dbReference type="PDBsum" id="2VCM"/>
<dbReference type="PDBsum" id="2VE1"/>
<dbReference type="PDBsum" id="2WO7"/>
<dbReference type="PDBsum" id="2Y60"/>
<dbReference type="PDBsum" id="2Y6F"/>
<dbReference type="PDBsum" id="3ZKU"/>
<dbReference type="PDBsum" id="3ZKY"/>
<dbReference type="PDBsum" id="3ZOI"/>
<dbReference type="PDBsum" id="4BB3"/>
<dbReference type="PDBsum" id="6Y0O"/>
<dbReference type="PDBsum" id="6Y0P"/>
<dbReference type="PDBsum" id="6ZAE"/>
<dbReference type="PDBsum" id="6ZAF"/>
<dbReference type="PDBsum" id="6ZAG"/>
<dbReference type="PDBsum" id="6ZAH"/>
<dbReference type="PDBsum" id="6ZAI"/>
<dbReference type="PDBsum" id="6ZAJ"/>
<dbReference type="PDBsum" id="6ZAK"/>
<dbReference type="PDBsum" id="6ZAL"/>
<dbReference type="PDBsum" id="6ZAM"/>
<dbReference type="PDBsum" id="6ZAN"/>
<dbReference type="PDBsum" id="6ZAO"/>
<dbReference type="PDBsum" id="6ZAP"/>
<dbReference type="PDBsum" id="6ZAQ"/>
<dbReference type="PDBsum" id="6ZW8"/>
<dbReference type="PDBsum" id="7P3L"/>
<dbReference type="PDBsum" id="7POY"/>
<dbReference type="PDBsum" id="7PSW"/>
<dbReference type="PDBsum" id="7ZOE"/>
<dbReference type="PDBsum" id="8A4G"/>
<dbReference type="PDBsum" id="8ALI"/>
<dbReference type="PDBsum" id="8ALJ"/>
<dbReference type="PDBsum" id="8BB9"/>
<dbReference type="PDBsum" id="8BBA"/>
<dbReference type="PDBsum" id="8BBB"/>
<dbReference type="PDBsum" id="8BBC"/>
<dbReference type="PDBsum" id="8BBD"/>
<dbReference type="PDBsum" id="8BSV"/>
<dbReference type="PDBsum" id="8BSW"/>
<dbReference type="PDBsum" id="8BSX"/>
<dbReference type="PDBsum" id="8BSY"/>
<dbReference type="PDBsum" id="8P46"/>
<dbReference type="PDBsum" id="8P47"/>
<dbReference type="PDBsum" id="8P48"/>
<dbReference type="PDBsum" id="8P7O"/>
<dbReference type="PDBsum" id="8P7P"/>
<dbReference type="PDBsum" id="8PTV"/>
<dbReference type="PDBsum" id="8PY5"/>
<dbReference type="PDBsum" id="8PY6"/>
<dbReference type="PDBsum" id="8PY7"/>
<dbReference type="PDBsum" id="8PY8"/>
<dbReference type="PDBsum" id="8PY9"/>
<dbReference type="PDBsum" id="8PYA"/>
<dbReference type="PDBsum" id="8RDB"/>
<dbReference type="SMR" id="P05326"/>
<dbReference type="STRING" id="227321.P05326"/>
<dbReference type="EnsemblFungi" id="CBF84347">
    <property type="protein sequence ID" value="CBF84347"/>
    <property type="gene ID" value="ANIA_02622"/>
</dbReference>
<dbReference type="KEGG" id="ani:ANIA_02622"/>
<dbReference type="VEuPathDB" id="FungiDB:AN2622"/>
<dbReference type="eggNOG" id="KOG0143">
    <property type="taxonomic scope" value="Eukaryota"/>
</dbReference>
<dbReference type="HOGENOM" id="CLU_010119_6_1_1"/>
<dbReference type="InParanoid" id="P05326"/>
<dbReference type="OMA" id="EADDNAY"/>
<dbReference type="OrthoDB" id="288590at2759"/>
<dbReference type="BRENDA" id="1.21.3.1">
    <property type="organism ID" value="517"/>
</dbReference>
<dbReference type="UniPathway" id="UPA00149">
    <property type="reaction ID" value="UER00240"/>
</dbReference>
<dbReference type="EvolutionaryTrace" id="P05326"/>
<dbReference type="Proteomes" id="UP000000560">
    <property type="component" value="Chromosome VI"/>
</dbReference>
<dbReference type="GO" id="GO:0005829">
    <property type="term" value="C:cytosol"/>
    <property type="evidence" value="ECO:0000250"/>
    <property type="project" value="GO_Central"/>
</dbReference>
<dbReference type="GO" id="GO:0005506">
    <property type="term" value="F:iron ion binding"/>
    <property type="evidence" value="ECO:0007669"/>
    <property type="project" value="InterPro"/>
</dbReference>
<dbReference type="GO" id="GO:0016216">
    <property type="term" value="F:isopenicillin-N synthase activity"/>
    <property type="evidence" value="ECO:0000314"/>
    <property type="project" value="AspGD"/>
</dbReference>
<dbReference type="GO" id="GO:0031418">
    <property type="term" value="F:L-ascorbic acid binding"/>
    <property type="evidence" value="ECO:0007669"/>
    <property type="project" value="UniProtKB-KW"/>
</dbReference>
<dbReference type="GO" id="GO:0042318">
    <property type="term" value="P:penicillin biosynthetic process"/>
    <property type="evidence" value="ECO:0000314"/>
    <property type="project" value="AspGD"/>
</dbReference>
<dbReference type="Gene3D" id="2.60.120.330">
    <property type="entry name" value="B-lactam Antibiotic, Isopenicillin N Synthase, Chain"/>
    <property type="match status" value="1"/>
</dbReference>
<dbReference type="InterPro" id="IPR026992">
    <property type="entry name" value="DIOX_N"/>
</dbReference>
<dbReference type="InterPro" id="IPR044861">
    <property type="entry name" value="IPNS-like_FE2OG_OXY"/>
</dbReference>
<dbReference type="InterPro" id="IPR027443">
    <property type="entry name" value="IPNS-like_sf"/>
</dbReference>
<dbReference type="InterPro" id="IPR002057">
    <property type="entry name" value="Isopenicillin-N_synth_CS"/>
</dbReference>
<dbReference type="InterPro" id="IPR005123">
    <property type="entry name" value="Oxoglu/Fe-dep_dioxygenase_dom"/>
</dbReference>
<dbReference type="PANTHER" id="PTHR10209:SF867">
    <property type="entry name" value="2-OXOGLUTARATE (2OG) AND FE(II)-DEPENDENT OXYGENASE SUPERFAMILY PROTEIN"/>
    <property type="match status" value="1"/>
</dbReference>
<dbReference type="PANTHER" id="PTHR10209">
    <property type="entry name" value="OXIDOREDUCTASE, 2OG-FE II OXYGENASE FAMILY PROTEIN"/>
    <property type="match status" value="1"/>
</dbReference>
<dbReference type="Pfam" id="PF03171">
    <property type="entry name" value="2OG-FeII_Oxy"/>
    <property type="match status" value="1"/>
</dbReference>
<dbReference type="Pfam" id="PF14226">
    <property type="entry name" value="DIOX_N"/>
    <property type="match status" value="1"/>
</dbReference>
<dbReference type="PRINTS" id="PR00682">
    <property type="entry name" value="IPNSYNTHASE"/>
</dbReference>
<dbReference type="SUPFAM" id="SSF51197">
    <property type="entry name" value="Clavaminate synthase-like"/>
    <property type="match status" value="1"/>
</dbReference>
<dbReference type="PROSITE" id="PS51471">
    <property type="entry name" value="FE2OG_OXY"/>
    <property type="match status" value="1"/>
</dbReference>
<dbReference type="PROSITE" id="PS00185">
    <property type="entry name" value="IPNS_1"/>
    <property type="match status" value="1"/>
</dbReference>
<dbReference type="PROSITE" id="PS00186">
    <property type="entry name" value="IPNS_2"/>
    <property type="match status" value="1"/>
</dbReference>
<organism>
    <name type="scientific">Emericella nidulans (strain FGSC A4 / ATCC 38163 / CBS 112.46 / NRRL 194 / M139)</name>
    <name type="common">Aspergillus nidulans</name>
    <dbReference type="NCBI Taxonomy" id="227321"/>
    <lineage>
        <taxon>Eukaryota</taxon>
        <taxon>Fungi</taxon>
        <taxon>Dikarya</taxon>
        <taxon>Ascomycota</taxon>
        <taxon>Pezizomycotina</taxon>
        <taxon>Eurotiomycetes</taxon>
        <taxon>Eurotiomycetidae</taxon>
        <taxon>Eurotiales</taxon>
        <taxon>Aspergillaceae</taxon>
        <taxon>Aspergillus</taxon>
        <taxon>Aspergillus subgen. Nidulantes</taxon>
    </lineage>
</organism>
<proteinExistence type="evidence at protein level"/>
<sequence length="331" mass="37522">MGSVSKANVPKIDVSPLFGDDQAAKMRVAQQIDAASRDTGFFYAVNHGINVQRLSQKTKEFHMSITPEEKWDLAIRAYNKEHQDQVRAGYYLSIPGKKAVESFCYLNPNFTPDHPRIQAKTPTHEVNVWPDETKHPGFQDFAEQYYWDVFGLSSALLKGYALALGKEENFFARHFKPDDTLASVVLIRYPYLDPYPEAAIKTAADGTKLSFEWHEDVSLITVLYQSNVQNLQVETAAGYQDIEADDTGYLINCGSYMAHLTNNYYKAPIHRVKWVNAERQSLPFFVNLGYDSVIDPFDPREPNGKSDREPLSYGDYLQNGLVSLINKNGQT</sequence>
<protein>
    <recommendedName>
        <fullName evidence="10">Isopenicillin N synthase</fullName>
        <shortName evidence="10">IPNS</shortName>
        <ecNumber evidence="7">1.21.3.1</ecNumber>
    </recommendedName>
</protein>
<gene>
    <name evidence="10" type="primary">ipnA</name>
    <name type="synonym">ips</name>
    <name type="ORF">AN2622</name>
</gene>
<comment type="function">
    <text evidence="2 5 6 7">Isopenicillin N synthase; part of the gene cluster that mediates the biosynthesis of penicillin, the world's most important antibiotic (PubMed:11755401, PubMed:3319778). IpnA catalyzes the cyclization of the tripeptide N-[(5S)-5-amino-5-carboxypentanoyl]-L-cysteinyl-D-valine (LLD-ACV or ACV) to form isopenicillin N (IPN) that contains the beta-lactam nucleus (PubMed:11755401, PubMed:28703303, PubMed:3319778). The penicillin biosynthesis occurs via 3 enzymatic steps, the first corresponding to the production of the tripeptide N-[(5S)-5-amino-5-carboxypentanoyl]-L-cysteinyl-D-valine (LLD-ACV or ACV) by the NRPS acvA. The tripeptide ACV is then cyclized to isopenicillin N (IPN) by the isopenicillin N synthase ipnA that forms the beta-lactam nucleus. Finally, the alpha-aminoadipyl side chain is exchanged for phenylacetic acid by the isopenicillin N acyltransferase penDE to yield penicillin in the peroxisomal matrix (By similarity).</text>
</comment>
<comment type="catalytic activity">
    <reaction evidence="5 6 7">
        <text>N-[(5S)-5-amino-5-carboxypentanoyl]-L-cysteinyl-D-valine + O2 = isopenicillin N + 2 H2O</text>
        <dbReference type="Rhea" id="RHEA:22428"/>
        <dbReference type="ChEBI" id="CHEBI:15377"/>
        <dbReference type="ChEBI" id="CHEBI:15379"/>
        <dbReference type="ChEBI" id="CHEBI:58399"/>
        <dbReference type="ChEBI" id="CHEBI:58572"/>
        <dbReference type="EC" id="1.21.3.1"/>
    </reaction>
    <physiologicalReaction direction="left-to-right" evidence="5 6 7">
        <dbReference type="Rhea" id="RHEA:22429"/>
    </physiologicalReaction>
</comment>
<comment type="cofactor">
    <cofactor evidence="3 4 8 9">
        <name>Fe(2+)</name>
        <dbReference type="ChEBI" id="CHEBI:29033"/>
    </cofactor>
    <text evidence="3 4 8 9">Binds 1 Fe(2+) ion per subunit.</text>
</comment>
<comment type="pathway">
    <text evidence="7">Antibiotic biosynthesis; penicillin G biosynthesis; penicillin G from L-alpha-aminoadipate and L-cysteine and L-valine: step 2/3.</text>
</comment>
<comment type="subunit">
    <text evidence="1">Monomer.</text>
</comment>
<comment type="subcellular location">
    <subcellularLocation>
        <location evidence="2">Cytoplasm</location>
        <location evidence="2">Cytosol</location>
    </subcellularLocation>
</comment>
<comment type="similarity">
    <text evidence="11">Belongs to the iron/ascorbate-dependent oxidoreductase family.</text>
</comment>
<accession>P05326</accession>
<accession>C8VHS7</accession>
<accession>Q5BA08</accession>
<feature type="chain" id="PRO_0000219498" description="Isopenicillin N synthase">
    <location>
        <begin position="1"/>
        <end position="331"/>
    </location>
</feature>
<feature type="domain" description="Fe2OG dioxygenase" evidence="3">
    <location>
        <begin position="176"/>
        <end position="288"/>
    </location>
</feature>
<feature type="binding site" evidence="4 24">
    <location>
        <position position="87"/>
    </location>
    <ligand>
        <name>isopenicillin N</name>
        <dbReference type="ChEBI" id="CHEBI:58399"/>
    </ligand>
</feature>
<feature type="binding site" evidence="4 6 9 12 24 33">
    <location>
        <position position="87"/>
    </location>
    <ligand>
        <name>N-[(5S)-5-amino-5-carboxypentanoyl]-L-cysteinyl-D-valine</name>
        <dbReference type="ChEBI" id="CHEBI:58572"/>
    </ligand>
</feature>
<feature type="binding site" evidence="4 24">
    <location>
        <position position="91"/>
    </location>
    <ligand>
        <name>isopenicillin N</name>
        <dbReference type="ChEBI" id="CHEBI:58399"/>
    </ligand>
</feature>
<feature type="binding site" evidence="4 6 9 12 24 33">
    <location>
        <position position="91"/>
    </location>
    <ligand>
        <name>N-[(5S)-5-amino-5-carboxypentanoyl]-L-cysteinyl-D-valine</name>
        <dbReference type="ChEBI" id="CHEBI:58572"/>
    </ligand>
</feature>
<feature type="binding site" evidence="4 24">
    <location>
        <position position="183"/>
    </location>
    <ligand>
        <name>isopenicillin N</name>
        <dbReference type="ChEBI" id="CHEBI:58399"/>
    </ligand>
</feature>
<feature type="binding site" evidence="4 6 9 24 33">
    <location>
        <position position="183"/>
    </location>
    <ligand>
        <name>N-[(5S)-5-amino-5-carboxypentanoyl]-L-cysteinyl-D-valine</name>
        <dbReference type="ChEBI" id="CHEBI:58572"/>
    </ligand>
</feature>
<feature type="binding site" evidence="4 24">
    <location>
        <position position="189"/>
    </location>
    <ligand>
        <name>isopenicillin N</name>
        <dbReference type="ChEBI" id="CHEBI:58399"/>
    </ligand>
</feature>
<feature type="binding site" evidence="4 6 9 12 24 33">
    <location>
        <position position="189"/>
    </location>
    <ligand>
        <name>N-[(5S)-5-amino-5-carboxypentanoyl]-L-cysteinyl-D-valine</name>
        <dbReference type="ChEBI" id="CHEBI:58572"/>
    </ligand>
</feature>
<feature type="binding site" evidence="3 12 13 14 15 16 17 19 20 21 22 23 24 25 26 27 28 29 30 31 32 34 35 36 37 38 39 40 41 42 43 44 45 46 47 49 50">
    <location>
        <position position="214"/>
    </location>
    <ligand>
        <name>Fe(2+)</name>
        <dbReference type="ChEBI" id="CHEBI:29033"/>
    </ligand>
</feature>
<feature type="binding site" evidence="4 9 24">
    <location>
        <position position="214"/>
    </location>
    <ligand>
        <name>N-[(5S)-5-amino-5-carboxypentanoyl]-L-cysteinyl-D-valine</name>
        <dbReference type="ChEBI" id="CHEBI:58572"/>
    </ligand>
</feature>
<feature type="binding site" evidence="3 12 13 14 15 16 17 19 20 21 22 23 24 25 26 27 28 29 30 31 32 34 35 36 37 38 39 40 41 42 43 44 45 46 47 49 50">
    <location>
        <position position="216"/>
    </location>
    <ligand>
        <name>Fe(2+)</name>
        <dbReference type="ChEBI" id="CHEBI:29033"/>
    </ligand>
</feature>
<feature type="binding site" evidence="4 6 9 12 24 33">
    <location>
        <position position="216"/>
    </location>
    <ligand>
        <name>N-[(5S)-5-amino-5-carboxypentanoyl]-L-cysteinyl-D-valine</name>
        <dbReference type="ChEBI" id="CHEBI:58572"/>
    </ligand>
</feature>
<feature type="binding site" evidence="3 12 13 14 15 16 17 19 20 21 22 23 24 25 26 27 28 29 30 31 32 34 35 36 37 38 39 40 41 42 43 44 45 46 47 49 50">
    <location>
        <position position="270"/>
    </location>
    <ligand>
        <name>Fe(2+)</name>
        <dbReference type="ChEBI" id="CHEBI:29033"/>
    </ligand>
</feature>
<feature type="binding site" evidence="3">
    <location>
        <position position="279"/>
    </location>
    <ligand>
        <name>2-oxoglutarate</name>
        <dbReference type="ChEBI" id="CHEBI:16810"/>
    </ligand>
</feature>
<feature type="binding site" evidence="4 24">
    <location>
        <position position="281"/>
    </location>
    <ligand>
        <name>isopenicillin N</name>
        <dbReference type="ChEBI" id="CHEBI:58399"/>
    </ligand>
</feature>
<feature type="binding site" evidence="4 6 9 12 24 33">
    <location>
        <position position="281"/>
    </location>
    <ligand>
        <name>N-[(5S)-5-amino-5-carboxypentanoyl]-L-cysteinyl-D-valine</name>
        <dbReference type="ChEBI" id="CHEBI:58572"/>
    </ligand>
</feature>
<feature type="site" description="Transition state stabilizer" evidence="24">
    <location>
        <position position="211"/>
    </location>
</feature>
<feature type="mutagenesis site" description="Strongly reduced the catalytic activity." evidence="6">
    <original>K</original>
    <variation>E</variation>
    <location>
        <position position="98"/>
    </location>
</feature>
<feature type="mutagenesis site" description="Strongly reduced the catalytic activity." evidence="6">
    <original>L</original>
    <variation>I</variation>
    <variation>V</variation>
    <location>
        <position position="223"/>
    </location>
</feature>
<feature type="mutagenesis site" description="Strongly reduced the catalytic activity." evidence="6">
    <original>L</original>
    <variation>I</variation>
    <variation>V</variation>
    <location>
        <position position="231"/>
    </location>
</feature>
<feature type="mutagenesis site" description="Abolishes the catalytic activity." evidence="6">
    <original>L</original>
    <variation>T</variation>
    <location>
        <position position="231"/>
    </location>
</feature>
<feature type="mutagenesis site" description="Strongly reduced the catalytic activity." evidence="6">
    <original>V</original>
    <variation>T</variation>
    <location>
        <position position="272"/>
    </location>
</feature>
<feature type="mutagenesis site" description="Strongly reduced the catalytic activity." evidence="6">
    <original>P</original>
    <variation>A</variation>
    <variation>I</variation>
    <variation>V</variation>
    <location>
        <position position="283"/>
    </location>
</feature>
<feature type="mutagenesis site" description="Abolishes the catalytic activity." evidence="6">
    <original>P</original>
    <variation>L</variation>
    <location>
        <position position="283"/>
    </location>
</feature>
<feature type="strand" evidence="53">
    <location>
        <begin position="11"/>
        <end position="13"/>
    </location>
</feature>
<feature type="helix" evidence="53">
    <location>
        <begin position="15"/>
        <end position="18"/>
    </location>
</feature>
<feature type="helix" evidence="53">
    <location>
        <begin position="22"/>
        <end position="37"/>
    </location>
</feature>
<feature type="strand" evidence="53">
    <location>
        <begin position="40"/>
        <end position="46"/>
    </location>
</feature>
<feature type="helix" evidence="53">
    <location>
        <begin position="51"/>
        <end position="64"/>
    </location>
</feature>
<feature type="helix" evidence="53">
    <location>
        <begin position="67"/>
        <end position="73"/>
    </location>
</feature>
<feature type="turn" evidence="53">
    <location>
        <begin position="76"/>
        <end position="78"/>
    </location>
</feature>
<feature type="strand" evidence="53">
    <location>
        <begin position="86"/>
        <end position="91"/>
    </location>
</feature>
<feature type="turn" evidence="53">
    <location>
        <begin position="95"/>
        <end position="97"/>
    </location>
</feature>
<feature type="strand" evidence="53">
    <location>
        <begin position="101"/>
        <end position="105"/>
    </location>
</feature>
<feature type="helix" evidence="53">
    <location>
        <begin position="115"/>
        <end position="118"/>
    </location>
</feature>
<feature type="turn" evidence="53">
    <location>
        <begin position="132"/>
        <end position="134"/>
    </location>
</feature>
<feature type="helix" evidence="53">
    <location>
        <begin position="138"/>
        <end position="163"/>
    </location>
</feature>
<feature type="turn" evidence="53">
    <location>
        <begin position="168"/>
        <end position="171"/>
    </location>
</feature>
<feature type="helix" evidence="53">
    <location>
        <begin position="172"/>
        <end position="174"/>
    </location>
</feature>
<feature type="turn" evidence="53">
    <location>
        <begin position="177"/>
        <end position="179"/>
    </location>
</feature>
<feature type="strand" evidence="53">
    <location>
        <begin position="183"/>
        <end position="189"/>
    </location>
</feature>
<feature type="helix" evidence="53">
    <location>
        <begin position="197"/>
        <end position="199"/>
    </location>
</feature>
<feature type="strand" evidence="53">
    <location>
        <begin position="208"/>
        <end position="214"/>
    </location>
</feature>
<feature type="strand" evidence="53">
    <location>
        <begin position="217"/>
        <end position="225"/>
    </location>
</feature>
<feature type="strand" evidence="53">
    <location>
        <begin position="231"/>
        <end position="235"/>
    </location>
</feature>
<feature type="strand" evidence="53">
    <location>
        <begin position="238"/>
        <end position="241"/>
    </location>
</feature>
<feature type="strand" evidence="53">
    <location>
        <begin position="248"/>
        <end position="253"/>
    </location>
</feature>
<feature type="helix" evidence="53">
    <location>
        <begin position="255"/>
        <end position="260"/>
    </location>
</feature>
<feature type="turn" evidence="53">
    <location>
        <begin position="261"/>
        <end position="263"/>
    </location>
</feature>
<feature type="strand" evidence="53">
    <location>
        <begin position="270"/>
        <end position="273"/>
    </location>
</feature>
<feature type="strand" evidence="53">
    <location>
        <begin position="279"/>
        <end position="286"/>
    </location>
</feature>
<feature type="strand" evidence="54">
    <location>
        <begin position="301"/>
        <end position="303"/>
    </location>
</feature>
<feature type="helix" evidence="53">
    <location>
        <begin position="313"/>
        <end position="328"/>
    </location>
</feature>
<keyword id="KW-0002">3D-structure</keyword>
<keyword id="KW-0045">Antibiotic biosynthesis</keyword>
<keyword id="KW-0963">Cytoplasm</keyword>
<keyword id="KW-0408">Iron</keyword>
<keyword id="KW-0479">Metal-binding</keyword>
<keyword id="KW-0560">Oxidoreductase</keyword>
<keyword id="KW-1185">Reference proteome</keyword>
<keyword id="KW-0847">Vitamin C</keyword>